<name>RR4_MELRE</name>
<reference key="1">
    <citation type="journal article" date="1994" name="Plant Syst. Evol.">
        <title>The chloroplast gene rps4 as a tool for the study of Poaceae phylogeny.</title>
        <authorList>
            <person name="Nadot S."/>
            <person name="Bajon R."/>
            <person name="Lejeune B."/>
        </authorList>
        <dbReference type="AGRICOLA" id="IND20417698"/>
    </citation>
    <scope>NUCLEOTIDE SEQUENCE [GENOMIC DNA]</scope>
</reference>
<protein>
    <recommendedName>
        <fullName evidence="3">Small ribosomal subunit protein uS4c</fullName>
    </recommendedName>
    <alternativeName>
        <fullName>30S ribosomal protein S4, chloroplastic</fullName>
    </alternativeName>
</protein>
<feature type="chain" id="PRO_0000132677" description="Small ribosomal subunit protein uS4c">
    <location>
        <begin position="1"/>
        <end position="196" status="greater than"/>
    </location>
</feature>
<feature type="domain" description="S4 RNA-binding">
    <location>
        <begin position="89"/>
        <end position="150"/>
    </location>
</feature>
<feature type="region of interest" description="Disordered" evidence="2">
    <location>
        <begin position="15"/>
        <end position="43"/>
    </location>
</feature>
<feature type="non-terminal residue">
    <location>
        <position position="196"/>
    </location>
</feature>
<dbReference type="EMBL" id="Z29259">
    <property type="protein sequence ID" value="CAA82458.1"/>
    <property type="molecule type" value="Genomic_DNA"/>
</dbReference>
<dbReference type="PIR" id="S41284">
    <property type="entry name" value="S41284"/>
</dbReference>
<dbReference type="SMR" id="P69654"/>
<dbReference type="GO" id="GO:0009507">
    <property type="term" value="C:chloroplast"/>
    <property type="evidence" value="ECO:0007669"/>
    <property type="project" value="UniProtKB-SubCell"/>
</dbReference>
<dbReference type="GO" id="GO:0015935">
    <property type="term" value="C:small ribosomal subunit"/>
    <property type="evidence" value="ECO:0007669"/>
    <property type="project" value="InterPro"/>
</dbReference>
<dbReference type="GO" id="GO:0019843">
    <property type="term" value="F:rRNA binding"/>
    <property type="evidence" value="ECO:0007669"/>
    <property type="project" value="UniProtKB-KW"/>
</dbReference>
<dbReference type="GO" id="GO:0003735">
    <property type="term" value="F:structural constituent of ribosome"/>
    <property type="evidence" value="ECO:0007669"/>
    <property type="project" value="InterPro"/>
</dbReference>
<dbReference type="GO" id="GO:0042274">
    <property type="term" value="P:ribosomal small subunit biogenesis"/>
    <property type="evidence" value="ECO:0007669"/>
    <property type="project" value="TreeGrafter"/>
</dbReference>
<dbReference type="GO" id="GO:0006412">
    <property type="term" value="P:translation"/>
    <property type="evidence" value="ECO:0007669"/>
    <property type="project" value="InterPro"/>
</dbReference>
<dbReference type="CDD" id="cd00165">
    <property type="entry name" value="S4"/>
    <property type="match status" value="1"/>
</dbReference>
<dbReference type="FunFam" id="1.10.1050.10:FF:000002">
    <property type="entry name" value="30S ribosomal protein S4, chloroplastic"/>
    <property type="match status" value="1"/>
</dbReference>
<dbReference type="FunFam" id="3.10.290.10:FF:000081">
    <property type="entry name" value="30S ribosomal protein S4, chloroplastic"/>
    <property type="match status" value="1"/>
</dbReference>
<dbReference type="Gene3D" id="1.10.1050.10">
    <property type="entry name" value="Ribosomal Protein S4 Delta 41, Chain A, domain 1"/>
    <property type="match status" value="1"/>
</dbReference>
<dbReference type="Gene3D" id="3.10.290.10">
    <property type="entry name" value="RNA-binding S4 domain"/>
    <property type="match status" value="1"/>
</dbReference>
<dbReference type="HAMAP" id="MF_01306_B">
    <property type="entry name" value="Ribosomal_uS4_B"/>
    <property type="match status" value="1"/>
</dbReference>
<dbReference type="InterPro" id="IPR022801">
    <property type="entry name" value="Ribosomal_uS4"/>
</dbReference>
<dbReference type="InterPro" id="IPR005709">
    <property type="entry name" value="Ribosomal_uS4_bac-type"/>
</dbReference>
<dbReference type="InterPro" id="IPR018079">
    <property type="entry name" value="Ribosomal_uS4_CS"/>
</dbReference>
<dbReference type="InterPro" id="IPR001912">
    <property type="entry name" value="Ribosomal_uS4_N"/>
</dbReference>
<dbReference type="InterPro" id="IPR002942">
    <property type="entry name" value="S4_RNA-bd"/>
</dbReference>
<dbReference type="InterPro" id="IPR036986">
    <property type="entry name" value="S4_RNA-bd_sf"/>
</dbReference>
<dbReference type="NCBIfam" id="NF003717">
    <property type="entry name" value="PRK05327.1"/>
    <property type="match status" value="1"/>
</dbReference>
<dbReference type="NCBIfam" id="TIGR01017">
    <property type="entry name" value="rpsD_bact"/>
    <property type="match status" value="1"/>
</dbReference>
<dbReference type="PANTHER" id="PTHR11831">
    <property type="entry name" value="30S 40S RIBOSOMAL PROTEIN"/>
    <property type="match status" value="1"/>
</dbReference>
<dbReference type="PANTHER" id="PTHR11831:SF4">
    <property type="entry name" value="SMALL RIBOSOMAL SUBUNIT PROTEIN US4M"/>
    <property type="match status" value="1"/>
</dbReference>
<dbReference type="Pfam" id="PF00163">
    <property type="entry name" value="Ribosomal_S4"/>
    <property type="match status" value="1"/>
</dbReference>
<dbReference type="Pfam" id="PF01479">
    <property type="entry name" value="S4"/>
    <property type="match status" value="1"/>
</dbReference>
<dbReference type="SMART" id="SM01390">
    <property type="entry name" value="Ribosomal_S4"/>
    <property type="match status" value="1"/>
</dbReference>
<dbReference type="SMART" id="SM00363">
    <property type="entry name" value="S4"/>
    <property type="match status" value="1"/>
</dbReference>
<dbReference type="SUPFAM" id="SSF55174">
    <property type="entry name" value="Alpha-L RNA-binding motif"/>
    <property type="match status" value="1"/>
</dbReference>
<dbReference type="PROSITE" id="PS00632">
    <property type="entry name" value="RIBOSOMAL_S4"/>
    <property type="match status" value="1"/>
</dbReference>
<dbReference type="PROSITE" id="PS50889">
    <property type="entry name" value="S4"/>
    <property type="match status" value="1"/>
</dbReference>
<organism>
    <name type="scientific">Melinis repens</name>
    <name type="common">Red Natal grass</name>
    <name type="synonym">Rhynchelytrum repens</name>
    <dbReference type="NCBI Taxonomy" id="29709"/>
    <lineage>
        <taxon>Eukaryota</taxon>
        <taxon>Viridiplantae</taxon>
        <taxon>Streptophyta</taxon>
        <taxon>Embryophyta</taxon>
        <taxon>Tracheophyta</taxon>
        <taxon>Spermatophyta</taxon>
        <taxon>Magnoliopsida</taxon>
        <taxon>Liliopsida</taxon>
        <taxon>Poales</taxon>
        <taxon>Poaceae</taxon>
        <taxon>PACMAD clade</taxon>
        <taxon>Panicoideae</taxon>
        <taxon>Panicodae</taxon>
        <taxon>Paniceae</taxon>
        <taxon>Melinidinae</taxon>
        <taxon>Melinis</taxon>
    </lineage>
</organism>
<gene>
    <name type="primary">rps4</name>
</gene>
<geneLocation type="chloroplast"/>
<accession>P69654</accession>
<accession>P36471</accession>
<accession>P36475</accession>
<proteinExistence type="inferred from homology"/>
<sequence length="196" mass="22737">MSRYRGPRLKKIRRLGALPGLTRKTPKSGSNQKKKFHSGKKEQYRIRLQEKQKLRFHYGLTERQLLRYVHIAGKAKRSTGQVLLQLLEMRLDNILFRLGMASTIPGARQLVNHRHILVNGRIVDIPSFRCKPRDIITTKDNQRSKRLVQNSIASSDPGKLPKHLTVDTLQYKGLVKKILDRKWVGLKVNELLVVEY</sequence>
<evidence type="ECO:0000250" key="1"/>
<evidence type="ECO:0000256" key="2">
    <source>
        <dbReference type="SAM" id="MobiDB-lite"/>
    </source>
</evidence>
<evidence type="ECO:0000305" key="3"/>
<comment type="function">
    <text evidence="1">One of the primary rRNA binding proteins, it binds directly to 16S rRNA where it nucleates assembly of the body of the 30S subunit.</text>
</comment>
<comment type="function">
    <text evidence="1">With S5 and S12 plays an important role in translational accuracy.</text>
</comment>
<comment type="subunit">
    <text evidence="1">Part of the 30S ribosomal subunit. Contacts protein S5. The interaction surface between S4 and S5 is involved in control of translational fidelity (By similarity).</text>
</comment>
<comment type="subcellular location">
    <subcellularLocation>
        <location>Plastid</location>
        <location>Chloroplast</location>
    </subcellularLocation>
</comment>
<comment type="similarity">
    <text evidence="3">Belongs to the universal ribosomal protein uS4 family.</text>
</comment>
<keyword id="KW-0150">Chloroplast</keyword>
<keyword id="KW-0934">Plastid</keyword>
<keyword id="KW-0687">Ribonucleoprotein</keyword>
<keyword id="KW-0689">Ribosomal protein</keyword>
<keyword id="KW-0694">RNA-binding</keyword>
<keyword id="KW-0699">rRNA-binding</keyword>